<keyword id="KW-0025">Alternative splicing</keyword>
<keyword id="KW-0963">Cytoplasm</keyword>
<keyword id="KW-0539">Nucleus</keyword>
<keyword id="KW-1185">Reference proteome</keyword>
<dbReference type="EMBL" id="AB023508">
    <property type="protein sequence ID" value="BAA84978.1"/>
    <property type="molecule type" value="mRNA"/>
</dbReference>
<dbReference type="EMBL" id="AB023509">
    <property type="protein sequence ID" value="BAA84979.1"/>
    <property type="molecule type" value="mRNA"/>
</dbReference>
<dbReference type="EMBL" id="CR541650">
    <property type="protein sequence ID" value="CAG46451.1"/>
    <property type="molecule type" value="mRNA"/>
</dbReference>
<dbReference type="EMBL" id="AK312220">
    <property type="protein sequence ID" value="BAG35153.1"/>
    <property type="molecule type" value="mRNA"/>
</dbReference>
<dbReference type="EMBL" id="AL133588">
    <property type="protein sequence ID" value="CAH10710.1"/>
    <property type="molecule type" value="mRNA"/>
</dbReference>
<dbReference type="EMBL" id="BC096700">
    <property type="protein sequence ID" value="AAH96700.1"/>
    <property type="molecule type" value="mRNA"/>
</dbReference>
<dbReference type="EMBL" id="BC096733">
    <property type="protein sequence ID" value="AAH96733.1"/>
    <property type="molecule type" value="mRNA"/>
</dbReference>
<dbReference type="EMBL" id="BC098165">
    <property type="protein sequence ID" value="AAH98165.1"/>
    <property type="molecule type" value="mRNA"/>
</dbReference>
<dbReference type="EMBL" id="BC099842">
    <property type="protein sequence ID" value="AAH99842.1"/>
    <property type="molecule type" value="mRNA"/>
</dbReference>
<dbReference type="CCDS" id="CCDS45475.1">
    <molecule id="Q9ULZ0-2"/>
</dbReference>
<dbReference type="CCDS" id="CCDS45477.1">
    <molecule id="Q9ULZ0-2"/>
</dbReference>
<dbReference type="CCDS" id="CCDS58456.1">
    <molecule id="Q9ULZ0-2"/>
</dbReference>
<dbReference type="CCDS" id="CCDS58458.1">
    <molecule id="Q9ULZ0-2"/>
</dbReference>
<dbReference type="CCDS" id="CCDS81974.1">
    <molecule id="Q9ULZ0-2"/>
</dbReference>
<dbReference type="CCDS" id="CCDS81976.1">
    <molecule id="Q9ULZ0-2"/>
</dbReference>
<dbReference type="RefSeq" id="NP_001093157.1">
    <molecule id="Q9ULZ0-2"/>
    <property type="nucleotide sequence ID" value="NM_001099687.3"/>
</dbReference>
<dbReference type="RefSeq" id="NP_001192188.1">
    <molecule id="Q9ULZ0-2"/>
    <property type="nucleotide sequence ID" value="NM_001205259.2"/>
</dbReference>
<dbReference type="RefSeq" id="NP_001230651.1">
    <molecule id="Q9ULZ0-2"/>
    <property type="nucleotide sequence ID" value="NM_001243722.2"/>
</dbReference>
<dbReference type="RefSeq" id="NP_001316990.1">
    <molecule id="Q9ULZ0-2"/>
    <property type="nucleotide sequence ID" value="NM_001330061.1"/>
</dbReference>
<dbReference type="RefSeq" id="NP_001316995.1">
    <molecule id="Q9ULZ0-2"/>
    <property type="nucleotide sequence ID" value="NM_001330066.1"/>
</dbReference>
<dbReference type="RefSeq" id="NP_057296.1">
    <molecule id="Q9ULZ0-2"/>
    <property type="nucleotide sequence ID" value="NM_016212.5"/>
</dbReference>
<dbReference type="RefSeq" id="XP_006721089.1">
    <property type="nucleotide sequence ID" value="XM_006721026.1"/>
</dbReference>
<dbReference type="RefSeq" id="XP_006721137.1">
    <property type="nucleotide sequence ID" value="XM_006721074.2"/>
</dbReference>
<dbReference type="RefSeq" id="XP_006721147.1">
    <property type="nucleotide sequence ID" value="XM_006721084.1"/>
</dbReference>
<dbReference type="RefSeq" id="XP_006721180.1">
    <property type="nucleotide sequence ID" value="XM_006721117.2"/>
</dbReference>
<dbReference type="RefSeq" id="XP_006721181.1">
    <property type="nucleotide sequence ID" value="XM_006721118.1"/>
</dbReference>
<dbReference type="RefSeq" id="XP_006724967.1">
    <molecule id="Q9ULZ0-1"/>
    <property type="nucleotide sequence ID" value="XM_006724904.3"/>
</dbReference>
<dbReference type="RefSeq" id="XP_006724968.1">
    <property type="nucleotide sequence ID" value="XM_006724905.3"/>
</dbReference>
<dbReference type="RefSeq" id="XP_011544081.1">
    <molecule id="Q9ULZ0-1"/>
    <property type="nucleotide sequence ID" value="XM_011545779.2"/>
</dbReference>
<dbReference type="RefSeq" id="XP_011544222.1">
    <molecule id="Q9ULZ0-1"/>
    <property type="nucleotide sequence ID" value="XM_011545920.1"/>
</dbReference>
<dbReference type="RefSeq" id="XP_011544235.1">
    <molecule id="Q9ULZ0-1"/>
    <property type="nucleotide sequence ID" value="XM_011545933.1"/>
</dbReference>
<dbReference type="RefSeq" id="XP_011544334.1">
    <molecule id="Q9ULZ0-1"/>
    <property type="nucleotide sequence ID" value="XM_011546032.1"/>
</dbReference>
<dbReference type="RefSeq" id="XP_011544335.1">
    <molecule id="Q9ULZ0-1"/>
    <property type="nucleotide sequence ID" value="XM_011546033.1"/>
</dbReference>
<dbReference type="RefSeq" id="XP_011544539.1">
    <molecule id="Q9ULZ0-1"/>
    <property type="nucleotide sequence ID" value="XM_011546237.1"/>
</dbReference>
<dbReference type="RefSeq" id="XP_011544540.1">
    <molecule id="Q9ULZ0-1"/>
    <property type="nucleotide sequence ID" value="XM_011546238.1"/>
</dbReference>
<dbReference type="RefSeq" id="XP_016878592.1">
    <property type="nucleotide sequence ID" value="XM_017023103.1"/>
</dbReference>
<dbReference type="RefSeq" id="XP_016879081.1">
    <property type="nucleotide sequence ID" value="XM_017023592.1"/>
</dbReference>
<dbReference type="RefSeq" id="XP_016879082.1">
    <property type="nucleotide sequence ID" value="XM_017023593.1"/>
</dbReference>
<dbReference type="RefSeq" id="XP_016879124.1">
    <property type="nucleotide sequence ID" value="XM_017023635.1"/>
</dbReference>
<dbReference type="RefSeq" id="XP_016879125.1">
    <property type="nucleotide sequence ID" value="XM_017023636.1"/>
</dbReference>
<dbReference type="RefSeq" id="XP_016879126.1">
    <molecule id="Q9ULZ0-1"/>
    <property type="nucleotide sequence ID" value="XM_017023637.1"/>
</dbReference>
<dbReference type="RefSeq" id="XP_016879128.1">
    <property type="nucleotide sequence ID" value="XM_017023639.1"/>
</dbReference>
<dbReference type="RefSeq" id="XP_016879441.1">
    <property type="nucleotide sequence ID" value="XM_017023952.1"/>
</dbReference>
<dbReference type="RefSeq" id="XP_016879442.1">
    <property type="nucleotide sequence ID" value="XM_017023953.1"/>
</dbReference>
<dbReference type="RefSeq" id="XP_016879446.1">
    <property type="nucleotide sequence ID" value="XM_017023957.1"/>
</dbReference>
<dbReference type="RefSeq" id="XP_016879447.1">
    <property type="nucleotide sequence ID" value="XM_017023958.1"/>
</dbReference>
<dbReference type="RefSeq" id="XP_016885615.1">
    <molecule id="Q9ULZ0-1"/>
    <property type="nucleotide sequence ID" value="XM_017030126.1"/>
</dbReference>
<dbReference type="RefSeq" id="XP_016885616.1">
    <molecule id="Q9ULZ0-1"/>
    <property type="nucleotide sequence ID" value="XM_017030127.1"/>
</dbReference>
<dbReference type="RefSeq" id="XP_054235963.1">
    <molecule id="Q9ULZ0-1"/>
    <property type="nucleotide sequence ID" value="XM_054379988.1"/>
</dbReference>
<dbReference type="BioGRID" id="117300">
    <property type="interactions" value="2"/>
</dbReference>
<dbReference type="BioGRID" id="575875">
    <property type="interactions" value="2"/>
</dbReference>
<dbReference type="BioGRID" id="609756">
    <property type="interactions" value="1"/>
</dbReference>
<dbReference type="FunCoup" id="Q9ULZ0">
    <property type="interactions" value="6"/>
</dbReference>
<dbReference type="IntAct" id="Q9ULZ0">
    <property type="interactions" value="1"/>
</dbReference>
<dbReference type="STRING" id="9606.ENSP00000339405"/>
<dbReference type="iPTMnet" id="Q9ULZ0"/>
<dbReference type="PhosphoSitePlus" id="Q9ULZ0"/>
<dbReference type="BioMuta" id="TP53TG3"/>
<dbReference type="PaxDb" id="9606-ENSP00000339405"/>
<dbReference type="ProteomicsDB" id="85155">
    <molecule id="Q9ULZ0-3"/>
</dbReference>
<dbReference type="Antibodypedia" id="54688">
    <property type="antibodies" value="11 antibodies from 1 providers"/>
</dbReference>
<dbReference type="Antibodypedia" id="60073">
    <property type="antibodies" value="14 antibodies from 3 providers"/>
</dbReference>
<dbReference type="DNASU" id="24150"/>
<dbReference type="Ensembl" id="ENST00000341305.7">
    <molecule id="Q9ULZ0-2"/>
    <property type="protein sequence ID" value="ENSP00000339405.5"/>
    <property type="gene ID" value="ENSG00000261509.7"/>
</dbReference>
<dbReference type="Ensembl" id="ENST00000360260.6">
    <molecule id="Q9ULZ0-3"/>
    <property type="protein sequence ID" value="ENSP00000353397.2"/>
    <property type="gene ID" value="ENSG00000205457.12"/>
</dbReference>
<dbReference type="Ensembl" id="ENST00000380148.6">
    <molecule id="Q9ULZ0-1"/>
    <property type="protein sequence ID" value="ENSP00000454398.1"/>
    <property type="gene ID" value="ENSG00000205456.12"/>
</dbReference>
<dbReference type="Ensembl" id="ENST00000398664.5">
    <molecule id="Q9ULZ0-2"/>
    <property type="protein sequence ID" value="ENSP00000455596.1"/>
    <property type="gene ID" value="ENSG00000205456.12"/>
</dbReference>
<dbReference type="Ensembl" id="ENST00000398682.5">
    <molecule id="Q9ULZ0-2"/>
    <property type="protein sequence ID" value="ENSP00000381672.4"/>
    <property type="gene ID" value="ENSG00000183632.15"/>
</dbReference>
<dbReference type="Ensembl" id="ENST00000561509.3">
    <molecule id="Q9ULZ0-2"/>
    <property type="protein sequence ID" value="ENSP00000455132.1"/>
    <property type="gene ID" value="ENSG00000205457.12"/>
</dbReference>
<dbReference type="Ensembl" id="ENST00000565622.5">
    <molecule id="Q9ULZ0-1"/>
    <property type="protein sequence ID" value="ENSP00000455448.1"/>
    <property type="gene ID" value="ENSG00000183632.15"/>
</dbReference>
<dbReference type="Ensembl" id="ENST00000567137.1">
    <molecule id="Q9ULZ0-3"/>
    <property type="protein sequence ID" value="ENSP00000454442.1"/>
    <property type="gene ID" value="ENSG00000205457.12"/>
</dbReference>
<dbReference type="Ensembl" id="ENST00000567724.5">
    <molecule id="Q9ULZ0-1"/>
    <property type="protein sequence ID" value="ENSP00000457303.1"/>
    <property type="gene ID" value="ENSG00000261509.7"/>
</dbReference>
<dbReference type="Ensembl" id="ENST00000569420.1">
    <molecule id="Q9ULZ0-3"/>
    <property type="protein sequence ID" value="ENSP00000457452.1"/>
    <property type="gene ID" value="ENSG00000183632.15"/>
</dbReference>
<dbReference type="Ensembl" id="ENST00000569719.5">
    <molecule id="Q9ULZ0-1"/>
    <property type="protein sequence ID" value="ENSP00000457790.1"/>
    <property type="gene ID" value="ENSG00000205457.12"/>
</dbReference>
<dbReference type="Ensembl" id="ENST00000569741.1">
    <molecule id="Q9ULZ0-3"/>
    <property type="protein sequence ID" value="ENSP00000456831.1"/>
    <property type="gene ID" value="ENSG00000261509.7"/>
</dbReference>
<dbReference type="Ensembl" id="ENST00000611321.1">
    <molecule id="Q9ULZ0-3"/>
    <property type="protein sequence ID" value="ENSP00000482283.1"/>
    <property type="gene ID" value="ENSG00000275034.3"/>
</dbReference>
<dbReference type="Ensembl" id="ENST00000617705.1">
    <molecule id="Q9ULZ0-3"/>
    <property type="protein sequence ID" value="ENSP00000481405.1"/>
    <property type="gene ID" value="ENSG00000278848.3"/>
</dbReference>
<dbReference type="Ensembl" id="ENST00000623042.2">
    <molecule id="Q9ULZ0-2"/>
    <property type="protein sequence ID" value="ENSP00000485635.1"/>
    <property type="gene ID" value="ENSG00000278848.3"/>
</dbReference>
<dbReference type="Ensembl" id="ENST00000623491.2">
    <molecule id="Q9ULZ0-2"/>
    <property type="protein sequence ID" value="ENSP00000485467.1"/>
    <property type="gene ID" value="ENSG00000275034.3"/>
</dbReference>
<dbReference type="GeneID" id="102723655"/>
<dbReference type="GeneID" id="102723713"/>
<dbReference type="GeneID" id="102724101"/>
<dbReference type="GeneID" id="102724127"/>
<dbReference type="GeneID" id="24150"/>
<dbReference type="GeneID" id="653550"/>
<dbReference type="GeneID" id="729264"/>
<dbReference type="GeneID" id="729355"/>
<dbReference type="KEGG" id="hsa:102724101"/>
<dbReference type="KEGG" id="hsa:102724127"/>
<dbReference type="KEGG" id="hsa:24150"/>
<dbReference type="KEGG" id="hsa:653550"/>
<dbReference type="KEGG" id="hsa:729264"/>
<dbReference type="KEGG" id="hsa:729355"/>
<dbReference type="MANE-Select" id="ENST00000341305.7">
    <property type="protein sequence ID" value="ENSP00000339405.5"/>
    <property type="RefSeq nucleotide sequence ID" value="NM_001099687.4"/>
    <property type="RefSeq protein sequence ID" value="NP_001093157.1"/>
</dbReference>
<dbReference type="MANE-Select" id="ENST00000398664.5">
    <property type="protein sequence ID" value="ENSP00000455596.1"/>
    <property type="RefSeq nucleotide sequence ID" value="NM_001243722.3"/>
    <property type="RefSeq protein sequence ID" value="NP_001230651.1"/>
</dbReference>
<dbReference type="MANE-Select" id="ENST00000398682.5">
    <property type="protein sequence ID" value="ENSP00000381672.4"/>
    <property type="RefSeq nucleotide sequence ID" value="NM_016212.5"/>
    <property type="RefSeq protein sequence ID" value="NP_057296.1"/>
</dbReference>
<dbReference type="MANE-Select" id="ENST00000561509.3">
    <property type="protein sequence ID" value="ENSP00000455132.1"/>
    <property type="RefSeq nucleotide sequence ID" value="NM_001205259.3"/>
    <property type="RefSeq protein sequence ID" value="NP_001192188.1"/>
</dbReference>
<dbReference type="MANE-Select" id="ENST00000623042.2">
    <property type="protein sequence ID" value="ENSP00000485635.1"/>
    <property type="RefSeq nucleotide sequence ID" value="NM_001330066.2"/>
    <property type="RefSeq protein sequence ID" value="NP_001316995.1"/>
</dbReference>
<dbReference type="MANE-Select" id="ENST00000623491.2">
    <property type="protein sequence ID" value="ENSP00000485467.1"/>
    <property type="RefSeq nucleotide sequence ID" value="NM_001330061.2"/>
    <property type="RefSeq protein sequence ID" value="NP_001316990.1"/>
</dbReference>
<dbReference type="UCSC" id="uc002edd.5">
    <molecule id="Q9ULZ0-2"/>
    <property type="organism name" value="human"/>
</dbReference>
<dbReference type="AGR" id="HGNC:30759"/>
<dbReference type="AGR" id="HGNC:37202"/>
<dbReference type="AGR" id="HGNC:42962"/>
<dbReference type="AGR" id="HGNC:44657"/>
<dbReference type="AGR" id="HGNC:51816"/>
<dbReference type="AGR" id="HGNC:51817"/>
<dbReference type="CTD" id="102724101"/>
<dbReference type="CTD" id="102724127"/>
<dbReference type="CTD" id="24150"/>
<dbReference type="CTD" id="653550"/>
<dbReference type="CTD" id="729264"/>
<dbReference type="CTD" id="729355"/>
<dbReference type="GeneCards" id="TP53TG3"/>
<dbReference type="GeneCards" id="TP53TG3B"/>
<dbReference type="GeneCards" id="TP53TG3C"/>
<dbReference type="GeneCards" id="TP53TG3D"/>
<dbReference type="GeneCards" id="TP53TG3E"/>
<dbReference type="GeneCards" id="TP53TG3F"/>
<dbReference type="HGNC" id="HGNC:30759">
    <property type="gene designation" value="TP53TG3"/>
</dbReference>
<dbReference type="HGNC" id="HGNC:37202">
    <property type="gene designation" value="TP53TG3B"/>
</dbReference>
<dbReference type="HGNC" id="HGNC:42962">
    <property type="gene designation" value="TP53TG3C"/>
</dbReference>
<dbReference type="HGNC" id="HGNC:44657">
    <property type="gene designation" value="TP53TG3D"/>
</dbReference>
<dbReference type="HGNC" id="HGNC:51816">
    <property type="gene designation" value="TP53TG3E"/>
</dbReference>
<dbReference type="HGNC" id="HGNC:51817">
    <property type="gene designation" value="TP53TG3F"/>
</dbReference>
<dbReference type="HPA" id="ENSG00000183632">
    <property type="expression patterns" value="Group enriched (epididymis, testis)"/>
</dbReference>
<dbReference type="HPA" id="ENSG00000205456">
    <property type="expression patterns" value="Tissue enhanced (epididymis, testis)"/>
</dbReference>
<dbReference type="HPA" id="ENSG00000205457">
    <property type="expression patterns" value="Not detected"/>
</dbReference>
<dbReference type="HPA" id="ENSG00000261509">
    <property type="expression patterns" value="Tissue enriched (epididymis)"/>
</dbReference>
<dbReference type="HPA" id="ENSG00000275034">
    <property type="expression patterns" value="Group enriched (epididymis, testis)"/>
</dbReference>
<dbReference type="HPA" id="ENSG00000278848">
    <property type="expression patterns" value="Group enriched (epididymis, testis)"/>
</dbReference>
<dbReference type="MIM" id="617482">
    <property type="type" value="gene"/>
</dbReference>
<dbReference type="neXtProt" id="NX_Q9ULZ0"/>
<dbReference type="OpenTargets" id="ENSG00000183632"/>
<dbReference type="OpenTargets" id="ENSG00000205456"/>
<dbReference type="OpenTargets" id="ENSG00000205457"/>
<dbReference type="PharmGKB" id="PA165450804"/>
<dbReference type="VEuPathDB" id="HostDB:ENSG00000183632"/>
<dbReference type="VEuPathDB" id="HostDB:ENSG00000205456"/>
<dbReference type="VEuPathDB" id="HostDB:ENSG00000205457"/>
<dbReference type="VEuPathDB" id="HostDB:ENSG00000261509"/>
<dbReference type="VEuPathDB" id="HostDB:ENSG00000275034"/>
<dbReference type="VEuPathDB" id="HostDB:ENSG00000278848"/>
<dbReference type="eggNOG" id="ENOG502TEEP">
    <property type="taxonomic scope" value="Eukaryota"/>
</dbReference>
<dbReference type="GeneTree" id="ENSGT00390000001729"/>
<dbReference type="HOGENOM" id="CLU_1916346_0_0_1"/>
<dbReference type="InParanoid" id="Q9ULZ0"/>
<dbReference type="OMA" id="WHPRHSA"/>
<dbReference type="OrthoDB" id="9470345at2759"/>
<dbReference type="PAN-GO" id="Q9ULZ0">
    <property type="GO annotations" value="0 GO annotations based on evolutionary models"/>
</dbReference>
<dbReference type="PhylomeDB" id="Q9ULZ0"/>
<dbReference type="TreeFam" id="TF342471"/>
<dbReference type="PathwayCommons" id="Q9ULZ0"/>
<dbReference type="SignaLink" id="Q9ULZ0"/>
<dbReference type="BioGRID-ORCS" id="102723655">
    <property type="hits" value="0 hits in 3 CRISPR screens"/>
</dbReference>
<dbReference type="BioGRID-ORCS" id="102723713">
    <property type="hits" value="0 hits in 5 CRISPR screens"/>
</dbReference>
<dbReference type="BioGRID-ORCS" id="102724101">
    <property type="hits" value="0 hits in 3 CRISPR screens"/>
</dbReference>
<dbReference type="BioGRID-ORCS" id="102724127">
    <property type="hits" value="0 hits in 10 CRISPR screens"/>
</dbReference>
<dbReference type="BioGRID-ORCS" id="24150">
    <property type="hits" value="25 hits in 294 CRISPR screens"/>
</dbReference>
<dbReference type="BioGRID-ORCS" id="653550">
    <property type="hits" value="26 hits in 557 CRISPR screens"/>
</dbReference>
<dbReference type="BioGRID-ORCS" id="729264">
    <property type="hits" value="19 hits in 307 CRISPR screens"/>
</dbReference>
<dbReference type="BioGRID-ORCS" id="729355">
    <property type="hits" value="27 hits in 243 CRISPR screens"/>
</dbReference>
<dbReference type="Pharos" id="Q9ULZ0">
    <property type="development level" value="Tdark"/>
</dbReference>
<dbReference type="PRO" id="PR:Q9ULZ0"/>
<dbReference type="Proteomes" id="UP000005640">
    <property type="component" value="Chromosome 16"/>
</dbReference>
<dbReference type="RNAct" id="Q9ULZ0">
    <property type="molecule type" value="protein"/>
</dbReference>
<dbReference type="Bgee" id="ENSG00000183632">
    <property type="expression patterns" value="Expressed in male germ line stem cell (sensu Vertebrata) in testis and 78 other cell types or tissues"/>
</dbReference>
<dbReference type="ExpressionAtlas" id="Q9ULZ0">
    <property type="expression patterns" value="baseline and differential"/>
</dbReference>
<dbReference type="GO" id="GO:0005737">
    <property type="term" value="C:cytoplasm"/>
    <property type="evidence" value="ECO:0000314"/>
    <property type="project" value="UniProtKB"/>
</dbReference>
<dbReference type="GO" id="GO:0005634">
    <property type="term" value="C:nucleus"/>
    <property type="evidence" value="ECO:0000314"/>
    <property type="project" value="UniProtKB"/>
</dbReference>
<name>T53G3_HUMAN</name>
<proteinExistence type="evidence at transcript level"/>
<evidence type="ECO:0000256" key="1">
    <source>
        <dbReference type="SAM" id="MobiDB-lite"/>
    </source>
</evidence>
<evidence type="ECO:0000269" key="2">
    <source>
    </source>
</evidence>
<evidence type="ECO:0000305" key="3"/>
<evidence type="ECO:0000312" key="4">
    <source>
        <dbReference type="HGNC" id="HGNC:30759"/>
    </source>
</evidence>
<evidence type="ECO:0000312" key="5">
    <source>
        <dbReference type="HGNC" id="HGNC:37202"/>
    </source>
</evidence>
<evidence type="ECO:0000312" key="6">
    <source>
        <dbReference type="HGNC" id="HGNC:42962"/>
    </source>
</evidence>
<evidence type="ECO:0000312" key="7">
    <source>
        <dbReference type="HGNC" id="HGNC:44657"/>
    </source>
</evidence>
<evidence type="ECO:0000312" key="8">
    <source>
        <dbReference type="HGNC" id="HGNC:51816"/>
    </source>
</evidence>
<evidence type="ECO:0000312" key="9">
    <source>
        <dbReference type="HGNC" id="HGNC:51817"/>
    </source>
</evidence>
<feature type="chain" id="PRO_0000328983" description="TP53-target gene 3 protein">
    <location>
        <begin position="1"/>
        <end position="124"/>
    </location>
</feature>
<feature type="region of interest" description="Disordered" evidence="1">
    <location>
        <begin position="1"/>
        <end position="42"/>
    </location>
</feature>
<feature type="compositionally biased region" description="Polar residues" evidence="1">
    <location>
        <begin position="1"/>
        <end position="11"/>
    </location>
</feature>
<feature type="splice variant" id="VSP_060197" description="In isoform 3.">
    <original>NCDTLSPRAAGFYACHVRSLIP</original>
    <variation>CHKSSAPQERRLDPRARCVVHI</variation>
    <location>
        <begin position="81"/>
        <end position="102"/>
    </location>
</feature>
<feature type="splice variant" id="VSP_060198" description="In isoform 3.">
    <location>
        <begin position="103"/>
        <end position="124"/>
    </location>
</feature>
<feature type="splice variant" id="VSP_060199" description="In isoform 1.">
    <original>SFSG</original>
    <variation>RHAQCGPSLGLG</variation>
    <location>
        <begin position="121"/>
        <end position="124"/>
    </location>
</feature>
<sequence>MRASPCISQPAASWHPRPSALRPTAGSGPDTRTPGTVEDGSAPCPAFRSPAVSPCGEEPCCFQISPAEETLELGRLVSPGNCDTLSPRAAGFYACHVRSLIPCRSTKGRWPLTASAAGLSSFSG</sequence>
<accession>Q9ULZ0</accession>
<accession>B2R5K6</accession>
<accession>Q4KN31</accession>
<accession>Q9ULY9</accession>
<organism>
    <name type="scientific">Homo sapiens</name>
    <name type="common">Human</name>
    <dbReference type="NCBI Taxonomy" id="9606"/>
    <lineage>
        <taxon>Eukaryota</taxon>
        <taxon>Metazoa</taxon>
        <taxon>Chordata</taxon>
        <taxon>Craniata</taxon>
        <taxon>Vertebrata</taxon>
        <taxon>Euteleostomi</taxon>
        <taxon>Mammalia</taxon>
        <taxon>Eutheria</taxon>
        <taxon>Euarchontoglires</taxon>
        <taxon>Primates</taxon>
        <taxon>Haplorrhini</taxon>
        <taxon>Catarrhini</taxon>
        <taxon>Hominidae</taxon>
        <taxon>Homo</taxon>
    </lineage>
</organism>
<gene>
    <name evidence="4" type="primary">TP53TG3</name>
    <name type="synonym">TP53TG3A</name>
</gene>
<gene>
    <name evidence="5" type="primary">TP53TG3B</name>
</gene>
<gene>
    <name evidence="6" type="primary">TP53TG3C</name>
</gene>
<gene>
    <name evidence="7" type="primary">TP53TG3D</name>
</gene>
<gene>
    <name evidence="8" type="primary">TP53TG3E</name>
</gene>
<gene>
    <name evidence="9" type="primary">TP53TG3F</name>
</gene>
<reference key="1">
    <citation type="journal article" date="1999" name="Genes Chromosomes Cancer">
        <title>Isolation and characterization of a novel TP53-inducible gene, TP53TG3.</title>
        <authorList>
            <person name="Ng C.C."/>
            <person name="Koyama K."/>
            <person name="Okamura S."/>
            <person name="Kondoh H."/>
            <person name="Takei Y."/>
            <person name="Nakamura Y."/>
        </authorList>
    </citation>
    <scope>NUCLEOTIDE SEQUENCE [MRNA] (ISOFORMS 1 AND 2)</scope>
    <scope>FUNCTION</scope>
    <scope>INDUCTION BY TP53</scope>
    <scope>TISSUE SPECIFICITY</scope>
    <scope>SUBCELLULAR LOCATION</scope>
</reference>
<reference key="2">
    <citation type="submission" date="2004-06" db="EMBL/GenBank/DDBJ databases">
        <title>Cloning of human full open reading frames in Gateway(TM) system entry vector (pDONR201).</title>
        <authorList>
            <person name="Ebert L."/>
            <person name="Schick M."/>
            <person name="Neubert P."/>
            <person name="Schatten R."/>
            <person name="Henze S."/>
            <person name="Korn B."/>
        </authorList>
    </citation>
    <scope>NUCLEOTIDE SEQUENCE [LARGE SCALE MRNA] (ISOFORM 1)</scope>
</reference>
<reference key="3">
    <citation type="journal article" date="2004" name="Nat. Genet.">
        <title>Complete sequencing and characterization of 21,243 full-length human cDNAs.</title>
        <authorList>
            <person name="Ota T."/>
            <person name="Suzuki Y."/>
            <person name="Nishikawa T."/>
            <person name="Otsuki T."/>
            <person name="Sugiyama T."/>
            <person name="Irie R."/>
            <person name="Wakamatsu A."/>
            <person name="Hayashi K."/>
            <person name="Sato H."/>
            <person name="Nagai K."/>
            <person name="Kimura K."/>
            <person name="Makita H."/>
            <person name="Sekine M."/>
            <person name="Obayashi M."/>
            <person name="Nishi T."/>
            <person name="Shibahara T."/>
            <person name="Tanaka T."/>
            <person name="Ishii S."/>
            <person name="Yamamoto J."/>
            <person name="Saito K."/>
            <person name="Kawai Y."/>
            <person name="Isono Y."/>
            <person name="Nakamura Y."/>
            <person name="Nagahari K."/>
            <person name="Murakami K."/>
            <person name="Yasuda T."/>
            <person name="Iwayanagi T."/>
            <person name="Wagatsuma M."/>
            <person name="Shiratori A."/>
            <person name="Sudo H."/>
            <person name="Hosoiri T."/>
            <person name="Kaku Y."/>
            <person name="Kodaira H."/>
            <person name="Kondo H."/>
            <person name="Sugawara M."/>
            <person name="Takahashi M."/>
            <person name="Kanda K."/>
            <person name="Yokoi T."/>
            <person name="Furuya T."/>
            <person name="Kikkawa E."/>
            <person name="Omura Y."/>
            <person name="Abe K."/>
            <person name="Kamihara K."/>
            <person name="Katsuta N."/>
            <person name="Sato K."/>
            <person name="Tanikawa M."/>
            <person name="Yamazaki M."/>
            <person name="Ninomiya K."/>
            <person name="Ishibashi T."/>
            <person name="Yamashita H."/>
            <person name="Murakawa K."/>
            <person name="Fujimori K."/>
            <person name="Tanai H."/>
            <person name="Kimata M."/>
            <person name="Watanabe M."/>
            <person name="Hiraoka S."/>
            <person name="Chiba Y."/>
            <person name="Ishida S."/>
            <person name="Ono Y."/>
            <person name="Takiguchi S."/>
            <person name="Watanabe S."/>
            <person name="Yosida M."/>
            <person name="Hotuta T."/>
            <person name="Kusano J."/>
            <person name="Kanehori K."/>
            <person name="Takahashi-Fujii A."/>
            <person name="Hara H."/>
            <person name="Tanase T.-O."/>
            <person name="Nomura Y."/>
            <person name="Togiya S."/>
            <person name="Komai F."/>
            <person name="Hara R."/>
            <person name="Takeuchi K."/>
            <person name="Arita M."/>
            <person name="Imose N."/>
            <person name="Musashino K."/>
            <person name="Yuuki H."/>
            <person name="Oshima A."/>
            <person name="Sasaki N."/>
            <person name="Aotsuka S."/>
            <person name="Yoshikawa Y."/>
            <person name="Matsunawa H."/>
            <person name="Ichihara T."/>
            <person name="Shiohata N."/>
            <person name="Sano S."/>
            <person name="Moriya S."/>
            <person name="Momiyama H."/>
            <person name="Satoh N."/>
            <person name="Takami S."/>
            <person name="Terashima Y."/>
            <person name="Suzuki O."/>
            <person name="Nakagawa S."/>
            <person name="Senoh A."/>
            <person name="Mizoguchi H."/>
            <person name="Goto Y."/>
            <person name="Shimizu F."/>
            <person name="Wakebe H."/>
            <person name="Hishigaki H."/>
            <person name="Watanabe T."/>
            <person name="Sugiyama A."/>
            <person name="Takemoto M."/>
            <person name="Kawakami B."/>
            <person name="Yamazaki M."/>
            <person name="Watanabe K."/>
            <person name="Kumagai A."/>
            <person name="Itakura S."/>
            <person name="Fukuzumi Y."/>
            <person name="Fujimori Y."/>
            <person name="Komiyama M."/>
            <person name="Tashiro H."/>
            <person name="Tanigami A."/>
            <person name="Fujiwara T."/>
            <person name="Ono T."/>
            <person name="Yamada K."/>
            <person name="Fujii Y."/>
            <person name="Ozaki K."/>
            <person name="Hirao M."/>
            <person name="Ohmori Y."/>
            <person name="Kawabata A."/>
            <person name="Hikiji T."/>
            <person name="Kobatake N."/>
            <person name="Inagaki H."/>
            <person name="Ikema Y."/>
            <person name="Okamoto S."/>
            <person name="Okitani R."/>
            <person name="Kawakami T."/>
            <person name="Noguchi S."/>
            <person name="Itoh T."/>
            <person name="Shigeta K."/>
            <person name="Senba T."/>
            <person name="Matsumura K."/>
            <person name="Nakajima Y."/>
            <person name="Mizuno T."/>
            <person name="Morinaga M."/>
            <person name="Sasaki M."/>
            <person name="Togashi T."/>
            <person name="Oyama M."/>
            <person name="Hata H."/>
            <person name="Watanabe M."/>
            <person name="Komatsu T."/>
            <person name="Mizushima-Sugano J."/>
            <person name="Satoh T."/>
            <person name="Shirai Y."/>
            <person name="Takahashi Y."/>
            <person name="Nakagawa K."/>
            <person name="Okumura K."/>
            <person name="Nagase T."/>
            <person name="Nomura N."/>
            <person name="Kikuchi H."/>
            <person name="Masuho Y."/>
            <person name="Yamashita R."/>
            <person name="Nakai K."/>
            <person name="Yada T."/>
            <person name="Nakamura Y."/>
            <person name="Ohara O."/>
            <person name="Isogai T."/>
            <person name="Sugano S."/>
        </authorList>
    </citation>
    <scope>NUCLEOTIDE SEQUENCE [LARGE SCALE MRNA] (ISOFORM 1)</scope>
    <source>
        <tissue>Testis</tissue>
    </source>
</reference>
<reference key="4">
    <citation type="journal article" date="2007" name="BMC Genomics">
        <title>The full-ORF clone resource of the German cDNA consortium.</title>
        <authorList>
            <person name="Bechtel S."/>
            <person name="Rosenfelder H."/>
            <person name="Duda A."/>
            <person name="Schmidt C.P."/>
            <person name="Ernst U."/>
            <person name="Wellenreuther R."/>
            <person name="Mehrle A."/>
            <person name="Schuster C."/>
            <person name="Bahr A."/>
            <person name="Bloecker H."/>
            <person name="Heubner D."/>
            <person name="Hoerlein A."/>
            <person name="Michel G."/>
            <person name="Wedler H."/>
            <person name="Koehrer K."/>
            <person name="Ottenwaelder B."/>
            <person name="Poustka A."/>
            <person name="Wiemann S."/>
            <person name="Schupp I."/>
        </authorList>
    </citation>
    <scope>NUCLEOTIDE SEQUENCE [LARGE SCALE MRNA] (ISOFORM 2)</scope>
    <source>
        <tissue>Testis</tissue>
    </source>
</reference>
<reference key="5">
    <citation type="journal article" date="2004" name="Genome Res.">
        <title>The status, quality, and expansion of the NIH full-length cDNA project: the Mammalian Gene Collection (MGC).</title>
        <authorList>
            <consortium name="The MGC Project Team"/>
        </authorList>
    </citation>
    <scope>NUCLEOTIDE SEQUENCE [LARGE SCALE MRNA] (ISOFORMS 2 AND 3)</scope>
</reference>
<comment type="function">
    <text evidence="2">May play a significant role in p53/TP53-mediating signaling pathway.</text>
</comment>
<comment type="subcellular location">
    <subcellularLocation>
        <location evidence="2">Cytoplasm</location>
    </subcellularLocation>
    <subcellularLocation>
        <location evidence="2">Nucleus</location>
    </subcellularLocation>
</comment>
<comment type="alternative products">
    <event type="alternative splicing"/>
    <isoform>
        <id>Q9ULZ0-2</id>
        <name>2</name>
        <name>TP53TG3a</name>
        <sequence type="displayed"/>
    </isoform>
    <isoform>
        <id>Q9ULZ0-1</id>
        <name>1</name>
        <name>TP53TG3b</name>
        <sequence type="described" ref="VSP_060199"/>
    </isoform>
    <isoform>
        <id>Q9ULZ0-3</id>
        <name>3</name>
        <sequence type="described" ref="VSP_060197 VSP_060198"/>
    </isoform>
</comment>
<comment type="tissue specificity">
    <text evidence="2">Strongly expressed in testis. Weakly expressed in heart, placenta and skeletal muscle.</text>
</comment>
<comment type="induction">
    <text evidence="2">By p53/TP53.</text>
</comment>
<comment type="miscellaneous">
    <molecule>Isoform 1</molecule>
    <text evidence="3">May be produced at very low levels due to a premature stop codon in the mRNA, leading to nonsense-mediated mRNA decay.</text>
</comment>
<protein>
    <recommendedName>
        <fullName evidence="3">TP53-target gene 3 protein</fullName>
    </recommendedName>
    <alternativeName>
        <fullName>TP53-inducible gene 3 protein</fullName>
    </alternativeName>
</protein>